<organism>
    <name type="scientific">Streptococcus pneumoniae (strain Taiwan19F-14)</name>
    <dbReference type="NCBI Taxonomy" id="487213"/>
    <lineage>
        <taxon>Bacteria</taxon>
        <taxon>Bacillati</taxon>
        <taxon>Bacillota</taxon>
        <taxon>Bacilli</taxon>
        <taxon>Lactobacillales</taxon>
        <taxon>Streptococcaceae</taxon>
        <taxon>Streptococcus</taxon>
    </lineage>
</organism>
<evidence type="ECO:0000255" key="1">
    <source>
        <dbReference type="HAMAP-Rule" id="MF_00367"/>
    </source>
</evidence>
<evidence type="ECO:0000255" key="2">
    <source>
        <dbReference type="PROSITE-ProRule" id="PRU01050"/>
    </source>
</evidence>
<dbReference type="EMBL" id="CP000921">
    <property type="protein sequence ID" value="ACO22718.1"/>
    <property type="molecule type" value="Genomic_DNA"/>
</dbReference>
<dbReference type="RefSeq" id="WP_000143265.1">
    <property type="nucleotide sequence ID" value="NC_012469.1"/>
</dbReference>
<dbReference type="SMR" id="C1CRT1"/>
<dbReference type="GeneID" id="45653689"/>
<dbReference type="KEGG" id="snt:SPT_1234"/>
<dbReference type="HOGENOM" id="CLU_038009_1_0_9"/>
<dbReference type="GO" id="GO:0005829">
    <property type="term" value="C:cytosol"/>
    <property type="evidence" value="ECO:0007669"/>
    <property type="project" value="TreeGrafter"/>
</dbReference>
<dbReference type="GO" id="GO:0005886">
    <property type="term" value="C:plasma membrane"/>
    <property type="evidence" value="ECO:0007669"/>
    <property type="project" value="UniProtKB-SubCell"/>
</dbReference>
<dbReference type="GO" id="GO:0005525">
    <property type="term" value="F:GTP binding"/>
    <property type="evidence" value="ECO:0007669"/>
    <property type="project" value="UniProtKB-UniRule"/>
</dbReference>
<dbReference type="GO" id="GO:0003924">
    <property type="term" value="F:GTPase activity"/>
    <property type="evidence" value="ECO:0007669"/>
    <property type="project" value="UniProtKB-UniRule"/>
</dbReference>
<dbReference type="GO" id="GO:0043024">
    <property type="term" value="F:ribosomal small subunit binding"/>
    <property type="evidence" value="ECO:0007669"/>
    <property type="project" value="TreeGrafter"/>
</dbReference>
<dbReference type="GO" id="GO:0070181">
    <property type="term" value="F:small ribosomal subunit rRNA binding"/>
    <property type="evidence" value="ECO:0007669"/>
    <property type="project" value="UniProtKB-UniRule"/>
</dbReference>
<dbReference type="GO" id="GO:0000028">
    <property type="term" value="P:ribosomal small subunit assembly"/>
    <property type="evidence" value="ECO:0007669"/>
    <property type="project" value="TreeGrafter"/>
</dbReference>
<dbReference type="CDD" id="cd04163">
    <property type="entry name" value="Era"/>
    <property type="match status" value="1"/>
</dbReference>
<dbReference type="CDD" id="cd22534">
    <property type="entry name" value="KH-II_Era"/>
    <property type="match status" value="1"/>
</dbReference>
<dbReference type="FunFam" id="3.30.300.20:FF:000003">
    <property type="entry name" value="GTPase Era"/>
    <property type="match status" value="1"/>
</dbReference>
<dbReference type="FunFam" id="3.40.50.300:FF:000094">
    <property type="entry name" value="GTPase Era"/>
    <property type="match status" value="1"/>
</dbReference>
<dbReference type="Gene3D" id="3.30.300.20">
    <property type="match status" value="1"/>
</dbReference>
<dbReference type="Gene3D" id="3.40.50.300">
    <property type="entry name" value="P-loop containing nucleotide triphosphate hydrolases"/>
    <property type="match status" value="1"/>
</dbReference>
<dbReference type="HAMAP" id="MF_00367">
    <property type="entry name" value="GTPase_Era"/>
    <property type="match status" value="1"/>
</dbReference>
<dbReference type="InterPro" id="IPR030388">
    <property type="entry name" value="G_ERA_dom"/>
</dbReference>
<dbReference type="InterPro" id="IPR006073">
    <property type="entry name" value="GTP-bd"/>
</dbReference>
<dbReference type="InterPro" id="IPR005662">
    <property type="entry name" value="GTPase_Era-like"/>
</dbReference>
<dbReference type="InterPro" id="IPR015946">
    <property type="entry name" value="KH_dom-like_a/b"/>
</dbReference>
<dbReference type="InterPro" id="IPR004044">
    <property type="entry name" value="KH_dom_type_2"/>
</dbReference>
<dbReference type="InterPro" id="IPR009019">
    <property type="entry name" value="KH_sf_prok-type"/>
</dbReference>
<dbReference type="InterPro" id="IPR027417">
    <property type="entry name" value="P-loop_NTPase"/>
</dbReference>
<dbReference type="InterPro" id="IPR005225">
    <property type="entry name" value="Small_GTP-bd"/>
</dbReference>
<dbReference type="NCBIfam" id="TIGR00436">
    <property type="entry name" value="era"/>
    <property type="match status" value="1"/>
</dbReference>
<dbReference type="NCBIfam" id="NF000908">
    <property type="entry name" value="PRK00089.1"/>
    <property type="match status" value="1"/>
</dbReference>
<dbReference type="NCBIfam" id="TIGR00231">
    <property type="entry name" value="small_GTP"/>
    <property type="match status" value="1"/>
</dbReference>
<dbReference type="PANTHER" id="PTHR42698">
    <property type="entry name" value="GTPASE ERA"/>
    <property type="match status" value="1"/>
</dbReference>
<dbReference type="PANTHER" id="PTHR42698:SF1">
    <property type="entry name" value="GTPASE ERA, MITOCHONDRIAL"/>
    <property type="match status" value="1"/>
</dbReference>
<dbReference type="Pfam" id="PF07650">
    <property type="entry name" value="KH_2"/>
    <property type="match status" value="1"/>
</dbReference>
<dbReference type="Pfam" id="PF01926">
    <property type="entry name" value="MMR_HSR1"/>
    <property type="match status" value="1"/>
</dbReference>
<dbReference type="SUPFAM" id="SSF52540">
    <property type="entry name" value="P-loop containing nucleoside triphosphate hydrolases"/>
    <property type="match status" value="1"/>
</dbReference>
<dbReference type="SUPFAM" id="SSF54814">
    <property type="entry name" value="Prokaryotic type KH domain (KH-domain type II)"/>
    <property type="match status" value="1"/>
</dbReference>
<dbReference type="PROSITE" id="PS51713">
    <property type="entry name" value="G_ERA"/>
    <property type="match status" value="1"/>
</dbReference>
<dbReference type="PROSITE" id="PS50823">
    <property type="entry name" value="KH_TYPE_2"/>
    <property type="match status" value="1"/>
</dbReference>
<comment type="function">
    <text evidence="1">An essential GTPase that binds both GDP and GTP, with rapid nucleotide exchange. Plays a role in 16S rRNA processing and 30S ribosomal subunit biogenesis and possibly also in cell cycle regulation and energy metabolism.</text>
</comment>
<comment type="subunit">
    <text evidence="1">Monomer.</text>
</comment>
<comment type="subcellular location">
    <subcellularLocation>
        <location>Cytoplasm</location>
    </subcellularLocation>
    <subcellularLocation>
        <location evidence="1">Cell membrane</location>
        <topology evidence="1">Peripheral membrane protein</topology>
    </subcellularLocation>
</comment>
<comment type="similarity">
    <text evidence="1 2">Belongs to the TRAFAC class TrmE-Era-EngA-EngB-Septin-like GTPase superfamily. Era GTPase family.</text>
</comment>
<gene>
    <name evidence="1" type="primary">era</name>
    <name type="ordered locus">SPT_1234</name>
</gene>
<sequence>MTFKSGFVAILGRPNVGKSTFLNHVMGQKIAIMSDKAQTTRNKIMGIYTTDKEQIVFIDTPGIHKPKTALGDFMVESAYSTLREVDTVLFMVPADEARGKGDDMIIERLKAAKVPVILVVNKIDKVHPDQLLSQIDDFRNQMDFKEIVPISALQGNNVSRLVDILSENLDEGFQYFPSDQITDHPERFLVSEMVREKVLHLTREEIPHSVAVVVDSMKRDEETDKVHIRATIMVERDSQKGIIIGKGGAMLKKIGSMARRDIELMLGDKVFLETWVKVKKNWRDKKLDLADFGYNEREY</sequence>
<proteinExistence type="inferred from homology"/>
<accession>C1CRT1</accession>
<protein>
    <recommendedName>
        <fullName evidence="1">GTPase Era</fullName>
    </recommendedName>
</protein>
<name>ERA_STRZT</name>
<reference key="1">
    <citation type="journal article" date="2010" name="Genome Biol.">
        <title>Structure and dynamics of the pan-genome of Streptococcus pneumoniae and closely related species.</title>
        <authorList>
            <person name="Donati C."/>
            <person name="Hiller N.L."/>
            <person name="Tettelin H."/>
            <person name="Muzzi A."/>
            <person name="Croucher N.J."/>
            <person name="Angiuoli S.V."/>
            <person name="Oggioni M."/>
            <person name="Dunning Hotopp J.C."/>
            <person name="Hu F.Z."/>
            <person name="Riley D.R."/>
            <person name="Covacci A."/>
            <person name="Mitchell T.J."/>
            <person name="Bentley S.D."/>
            <person name="Kilian M."/>
            <person name="Ehrlich G.D."/>
            <person name="Rappuoli R."/>
            <person name="Moxon E.R."/>
            <person name="Masignani V."/>
        </authorList>
    </citation>
    <scope>NUCLEOTIDE SEQUENCE [LARGE SCALE GENOMIC DNA]</scope>
    <source>
        <strain>Taiwan19F-14</strain>
    </source>
</reference>
<keyword id="KW-1003">Cell membrane</keyword>
<keyword id="KW-0963">Cytoplasm</keyword>
<keyword id="KW-0342">GTP-binding</keyword>
<keyword id="KW-0472">Membrane</keyword>
<keyword id="KW-0547">Nucleotide-binding</keyword>
<keyword id="KW-0690">Ribosome biogenesis</keyword>
<keyword id="KW-0694">RNA-binding</keyword>
<keyword id="KW-0699">rRNA-binding</keyword>
<feature type="chain" id="PRO_1000189976" description="GTPase Era">
    <location>
        <begin position="1"/>
        <end position="299"/>
    </location>
</feature>
<feature type="domain" description="Era-type G" evidence="2">
    <location>
        <begin position="4"/>
        <end position="171"/>
    </location>
</feature>
<feature type="domain" description="KH type-2" evidence="1">
    <location>
        <begin position="202"/>
        <end position="280"/>
    </location>
</feature>
<feature type="region of interest" description="G1" evidence="2">
    <location>
        <begin position="12"/>
        <end position="19"/>
    </location>
</feature>
<feature type="region of interest" description="G2" evidence="2">
    <location>
        <begin position="38"/>
        <end position="42"/>
    </location>
</feature>
<feature type="region of interest" description="G3" evidence="2">
    <location>
        <begin position="59"/>
        <end position="62"/>
    </location>
</feature>
<feature type="region of interest" description="G4" evidence="2">
    <location>
        <begin position="121"/>
        <end position="124"/>
    </location>
</feature>
<feature type="region of interest" description="G5" evidence="2">
    <location>
        <begin position="150"/>
        <end position="152"/>
    </location>
</feature>
<feature type="binding site" evidence="1">
    <location>
        <begin position="12"/>
        <end position="19"/>
    </location>
    <ligand>
        <name>GTP</name>
        <dbReference type="ChEBI" id="CHEBI:37565"/>
    </ligand>
</feature>
<feature type="binding site" evidence="1">
    <location>
        <begin position="59"/>
        <end position="63"/>
    </location>
    <ligand>
        <name>GTP</name>
        <dbReference type="ChEBI" id="CHEBI:37565"/>
    </ligand>
</feature>
<feature type="binding site" evidence="1">
    <location>
        <begin position="121"/>
        <end position="124"/>
    </location>
    <ligand>
        <name>GTP</name>
        <dbReference type="ChEBI" id="CHEBI:37565"/>
    </ligand>
</feature>